<proteinExistence type="evidence at protein level"/>
<sequence>MNMFLLLMSLYLLGSARGTSGQSDESSGSIDHQTSVQQLSGEFFSLENPSDAEALYETASGLNTLSEHGSSEHGSREHTVAEHTPGEHAESEHASGEPAATGHAEGEHTVGEQPSGEQPSGEHLSGEQSLGEHASGEQPSDEQLSGEHASGEQPSGEHASGEQPSGEQPSGEHASGEQSLGEHALSEKPSGEQPSGAPISSISTGTILNCYTCAYMNDQGRCLRGEGTCITQNSQQCMLKKIFEGGKLQFMVQGCENMCPSMNLFSHGTRMQIICCRNQSFCNKI</sequence>
<reference key="1">
    <citation type="journal article" date="1993" name="Mol. Reprod. Dev.">
        <title>Cloning and sequencing of baboon and cynomolgus monkey intra-acrosomal protein SP-10: homology with human SP-10 and a mouse sperm antigen (MSA-63).</title>
        <authorList>
            <person name="Freemerman A.J."/>
            <person name="Wright R.M."/>
            <person name="Flickinger C.J."/>
            <person name="Herr J.C."/>
        </authorList>
    </citation>
    <scope>NUCLEOTIDE SEQUENCE [MRNA]</scope>
    <source>
        <tissue>Testis</tissue>
    </source>
</reference>
<reference key="2">
    <citation type="journal article" date="1994" name="Biol. Reprod.">
        <title>Tissue specificity of the acrosomal protein SP-10: a contraceptive vaccine candidate molecule.</title>
        <authorList>
            <person name="Freemerman A.J."/>
            <person name="Wright R.M."/>
            <person name="Flickinger C.J."/>
            <person name="Herr J.C."/>
        </authorList>
    </citation>
    <scope>CHARACTERIZATION</scope>
</reference>
<organism>
    <name type="scientific">Papio hamadryas</name>
    <name type="common">Hamadryas baboon</name>
    <dbReference type="NCBI Taxonomy" id="9557"/>
    <lineage>
        <taxon>Eukaryota</taxon>
        <taxon>Metazoa</taxon>
        <taxon>Chordata</taxon>
        <taxon>Craniata</taxon>
        <taxon>Vertebrata</taxon>
        <taxon>Euteleostomi</taxon>
        <taxon>Mammalia</taxon>
        <taxon>Eutheria</taxon>
        <taxon>Euarchontoglires</taxon>
        <taxon>Primates</taxon>
        <taxon>Haplorrhini</taxon>
        <taxon>Catarrhini</taxon>
        <taxon>Cercopithecidae</taxon>
        <taxon>Cercopithecinae</taxon>
        <taxon>Papio</taxon>
    </lineage>
</organism>
<protein>
    <recommendedName>
        <fullName>Acrosomal protein SP-10</fullName>
    </recommendedName>
    <alternativeName>
        <fullName>Acrosomal vesicle protein 1</fullName>
    </alternativeName>
</protein>
<feature type="signal peptide" evidence="1">
    <location>
        <begin position="1"/>
        <end position="21"/>
    </location>
</feature>
<feature type="chain" id="PRO_0000020762" description="Acrosomal protein SP-10">
    <location>
        <begin position="22"/>
        <end position="285"/>
    </location>
</feature>
<feature type="repeat" description="1-1">
    <location>
        <begin position="66"/>
        <end position="70"/>
    </location>
</feature>
<feature type="repeat" description="1-2">
    <location>
        <begin position="71"/>
        <end position="75"/>
    </location>
</feature>
<feature type="repeat" description="2-1">
    <location>
        <begin position="85"/>
        <end position="89"/>
    </location>
</feature>
<feature type="repeat" description="1-3">
    <location>
        <begin position="91"/>
        <end position="95"/>
    </location>
</feature>
<feature type="repeat" description="3-1">
    <location>
        <begin position="110"/>
        <end position="114"/>
    </location>
</feature>
<feature type="repeat" description="3-2">
    <location>
        <begin position="115"/>
        <end position="119"/>
    </location>
</feature>
<feature type="repeat" description="2-2">
    <location>
        <begin position="120"/>
        <end position="124"/>
    </location>
</feature>
<feature type="repeat" description="3-3">
    <location>
        <begin position="125"/>
        <end position="129"/>
    </location>
</feature>
<feature type="repeat" description="2-3">
    <location>
        <begin position="130"/>
        <end position="134"/>
    </location>
</feature>
<feature type="repeat" description="3-4">
    <location>
        <begin position="135"/>
        <end position="139"/>
    </location>
</feature>
<feature type="repeat" description="2-4">
    <location>
        <begin position="145"/>
        <end position="149"/>
    </location>
</feature>
<feature type="repeat" description="3-5">
    <location>
        <begin position="150"/>
        <end position="154"/>
    </location>
</feature>
<feature type="repeat" description="2-5">
    <location>
        <begin position="155"/>
        <end position="159"/>
    </location>
</feature>
<feature type="repeat" description="3-6">
    <location>
        <begin position="160"/>
        <end position="164"/>
    </location>
</feature>
<feature type="repeat" description="3-7">
    <location>
        <begin position="165"/>
        <end position="169"/>
    </location>
</feature>
<feature type="repeat" description="2-6">
    <location>
        <begin position="170"/>
        <end position="174"/>
    </location>
</feature>
<feature type="repeat" description="3-8">
    <location>
        <begin position="175"/>
        <end position="179"/>
    </location>
</feature>
<feature type="repeat" description="2-7">
    <location>
        <begin position="180"/>
        <end position="184"/>
    </location>
</feature>
<feature type="repeat" description="3-9">
    <location>
        <begin position="190"/>
        <end position="194"/>
    </location>
</feature>
<feature type="region of interest" description="Disordered" evidence="2">
    <location>
        <begin position="64"/>
        <end position="200"/>
    </location>
</feature>
<feature type="region of interest" description="3 X 5 AA repeats of S-E-H-[GA]-A">
    <location>
        <begin position="66"/>
        <end position="95"/>
    </location>
</feature>
<feature type="region of interest" description="7 X 5 AA repeats of S-G-E-H-[AL]">
    <location>
        <begin position="85"/>
        <end position="184"/>
    </location>
</feature>
<feature type="region of interest" description="9 X 5 AA repeats of [SV]-G-E-Q-[PSA]">
    <location>
        <begin position="110"/>
        <end position="194"/>
    </location>
</feature>
<feature type="compositionally biased region" description="Basic and acidic residues" evidence="2">
    <location>
        <begin position="69"/>
        <end position="95"/>
    </location>
</feature>
<feature type="glycosylation site" description="N-linked (GlcNAc...) asparagine" evidence="1">
    <location>
        <position position="278"/>
    </location>
</feature>
<feature type="splice variant" id="VSP_004129" description="In isoform Short." evidence="3">
    <location>
        <begin position="172"/>
        <end position="205"/>
    </location>
</feature>
<accession>Q06990</accession>
<evidence type="ECO:0000255" key="1"/>
<evidence type="ECO:0000256" key="2">
    <source>
        <dbReference type="SAM" id="MobiDB-lite"/>
    </source>
</evidence>
<evidence type="ECO:0000305" key="3"/>
<keyword id="KW-0025">Alternative splicing</keyword>
<keyword id="KW-0968">Cytoplasmic vesicle</keyword>
<keyword id="KW-0325">Glycoprotein</keyword>
<keyword id="KW-0677">Repeat</keyword>
<keyword id="KW-0732">Signal</keyword>
<name>ASPX_PAPHA</name>
<comment type="subcellular location">
    <subcellularLocation>
        <location>Cytoplasmic vesicle</location>
        <location>Secretory vesicle</location>
        <location>Acrosome</location>
    </subcellularLocation>
    <text>Nascent acrosomal vesicle of Golgi phase spermatids.</text>
</comment>
<comment type="alternative products">
    <event type="alternative splicing"/>
    <isoform>
        <id>Q06990-1</id>
        <name>Long</name>
        <sequence type="displayed"/>
    </isoform>
    <isoform>
        <id>Q06990-2</id>
        <name>Short</name>
        <sequence type="described" ref="VSP_004129"/>
    </isoform>
</comment>
<comment type="tissue specificity">
    <text>Testis.</text>
</comment>
<dbReference type="EMBL" id="S56458">
    <property type="protein sequence ID" value="AAB25692.1"/>
    <property type="molecule type" value="mRNA"/>
</dbReference>
<dbReference type="EMBL" id="S56458">
    <property type="protein sequence ID" value="AAB25693.1"/>
    <property type="molecule type" value="mRNA"/>
</dbReference>
<dbReference type="GlyCosmos" id="Q06990">
    <property type="glycosylation" value="1 site, No reported glycans"/>
</dbReference>
<dbReference type="GO" id="GO:0001669">
    <property type="term" value="C:acrosomal vesicle"/>
    <property type="evidence" value="ECO:0007669"/>
    <property type="project" value="UniProtKB-SubCell"/>
</dbReference>
<dbReference type="CDD" id="cd23628">
    <property type="entry name" value="TFP_LU_ECD_SP10_like"/>
    <property type="match status" value="1"/>
</dbReference>
<dbReference type="InterPro" id="IPR052671">
    <property type="entry name" value="Acrosomal_SP-10-like"/>
</dbReference>
<dbReference type="InterPro" id="IPR016054">
    <property type="entry name" value="LY6_UPA_recep-like"/>
</dbReference>
<dbReference type="PANTHER" id="PTHR17571:SF34">
    <property type="entry name" value="ACROSOMAL PROTEIN SP-10"/>
    <property type="match status" value="1"/>
</dbReference>
<dbReference type="PANTHER" id="PTHR17571">
    <property type="entry name" value="URINARY PROTEIN RUP /ACROSOMAL PROTEIN SP-10"/>
    <property type="match status" value="1"/>
</dbReference>
<dbReference type="Pfam" id="PF00021">
    <property type="entry name" value="UPAR_LY6"/>
    <property type="match status" value="1"/>
</dbReference>
<gene>
    <name type="primary">ACRV1</name>
</gene>